<dbReference type="EC" id="2.7.11.1" evidence="12"/>
<dbReference type="EMBL" id="AL138654">
    <property type="protein sequence ID" value="CAB86675.1"/>
    <property type="molecule type" value="Genomic_DNA"/>
</dbReference>
<dbReference type="EMBL" id="CP002686">
    <property type="protein sequence ID" value="AEE77758.1"/>
    <property type="molecule type" value="Genomic_DNA"/>
</dbReference>
<dbReference type="EMBL" id="DQ446723">
    <property type="protein sequence ID" value="ABE65985.1"/>
    <property type="molecule type" value="mRNA"/>
</dbReference>
<dbReference type="EMBL" id="FJ708731">
    <property type="protein sequence ID" value="ACN59326.1"/>
    <property type="molecule type" value="mRNA"/>
</dbReference>
<dbReference type="PIR" id="T47346">
    <property type="entry name" value="T47346"/>
</dbReference>
<dbReference type="RefSeq" id="NP_189874.1">
    <property type="nucleotide sequence ID" value="NM_114156.2"/>
</dbReference>
<dbReference type="PDB" id="5WLS">
    <property type="method" value="X-ray"/>
    <property type="resolution" value="2.50 A"/>
    <property type="chains" value="A/B=26-233"/>
</dbReference>
<dbReference type="PDBsum" id="5WLS"/>
<dbReference type="SMR" id="Q9M1L7"/>
<dbReference type="FunCoup" id="Q9M1L7">
    <property type="interactions" value="87"/>
</dbReference>
<dbReference type="IntAct" id="Q9M1L7">
    <property type="interactions" value="21"/>
</dbReference>
<dbReference type="STRING" id="3702.Q9M1L7"/>
<dbReference type="GlyCosmos" id="Q9M1L7">
    <property type="glycosylation" value="4 sites, No reported glycans"/>
</dbReference>
<dbReference type="GlyGen" id="Q9M1L7">
    <property type="glycosylation" value="5 sites"/>
</dbReference>
<dbReference type="PaxDb" id="3702-AT3G42880.1"/>
<dbReference type="ProteomicsDB" id="226502"/>
<dbReference type="EnsemblPlants" id="AT3G42880.1">
    <property type="protein sequence ID" value="AT3G42880.1"/>
    <property type="gene ID" value="AT3G42880"/>
</dbReference>
<dbReference type="GeneID" id="823335"/>
<dbReference type="Gramene" id="AT3G42880.1">
    <property type="protein sequence ID" value="AT3G42880.1"/>
    <property type="gene ID" value="AT3G42880"/>
</dbReference>
<dbReference type="KEGG" id="ath:AT3G42880"/>
<dbReference type="Araport" id="AT3G42880"/>
<dbReference type="TAIR" id="AT3G42880">
    <property type="gene designation" value="PRK3"/>
</dbReference>
<dbReference type="eggNOG" id="ENOG502QRTV">
    <property type="taxonomic scope" value="Eukaryota"/>
</dbReference>
<dbReference type="HOGENOM" id="CLU_000288_92_6_1"/>
<dbReference type="InParanoid" id="Q9M1L7"/>
<dbReference type="OMA" id="SPCSGTW"/>
<dbReference type="PhylomeDB" id="Q9M1L7"/>
<dbReference type="PRO" id="PR:Q9M1L7"/>
<dbReference type="Proteomes" id="UP000006548">
    <property type="component" value="Chromosome 3"/>
</dbReference>
<dbReference type="ExpressionAtlas" id="Q9M1L7">
    <property type="expression patterns" value="baseline and differential"/>
</dbReference>
<dbReference type="GO" id="GO:0016020">
    <property type="term" value="C:membrane"/>
    <property type="evidence" value="ECO:0007669"/>
    <property type="project" value="UniProtKB-SubCell"/>
</dbReference>
<dbReference type="GO" id="GO:0009506">
    <property type="term" value="C:plasmodesma"/>
    <property type="evidence" value="ECO:0007005"/>
    <property type="project" value="TAIR"/>
</dbReference>
<dbReference type="GO" id="GO:0005524">
    <property type="term" value="F:ATP binding"/>
    <property type="evidence" value="ECO:0007669"/>
    <property type="project" value="UniProtKB-KW"/>
</dbReference>
<dbReference type="GO" id="GO:0106310">
    <property type="term" value="F:protein serine kinase activity"/>
    <property type="evidence" value="ECO:0007669"/>
    <property type="project" value="RHEA"/>
</dbReference>
<dbReference type="GO" id="GO:0004674">
    <property type="term" value="F:protein serine/threonine kinase activity"/>
    <property type="evidence" value="ECO:0000314"/>
    <property type="project" value="TAIR"/>
</dbReference>
<dbReference type="GO" id="GO:0080092">
    <property type="term" value="P:regulation of pollen tube growth"/>
    <property type="evidence" value="ECO:0000315"/>
    <property type="project" value="TAIR"/>
</dbReference>
<dbReference type="CDD" id="cd14066">
    <property type="entry name" value="STKc_IRAK"/>
    <property type="match status" value="1"/>
</dbReference>
<dbReference type="FunFam" id="1.10.510.10:FF:000480">
    <property type="entry name" value="Pollen receptor-like kinase 1"/>
    <property type="match status" value="1"/>
</dbReference>
<dbReference type="FunFam" id="3.80.10.10:FF:001009">
    <property type="entry name" value="Pollen receptor-like kinase 6"/>
    <property type="match status" value="1"/>
</dbReference>
<dbReference type="Gene3D" id="3.30.200.20">
    <property type="entry name" value="Phosphorylase Kinase, domain 1"/>
    <property type="match status" value="1"/>
</dbReference>
<dbReference type="Gene3D" id="3.80.10.10">
    <property type="entry name" value="Ribonuclease Inhibitor"/>
    <property type="match status" value="1"/>
</dbReference>
<dbReference type="Gene3D" id="1.10.510.10">
    <property type="entry name" value="Transferase(Phosphotransferase) domain 1"/>
    <property type="match status" value="1"/>
</dbReference>
<dbReference type="InterPro" id="IPR011009">
    <property type="entry name" value="Kinase-like_dom_sf"/>
</dbReference>
<dbReference type="InterPro" id="IPR001611">
    <property type="entry name" value="Leu-rich_rpt"/>
</dbReference>
<dbReference type="InterPro" id="IPR032675">
    <property type="entry name" value="LRR_dom_sf"/>
</dbReference>
<dbReference type="InterPro" id="IPR013210">
    <property type="entry name" value="LRR_N_plant-typ"/>
</dbReference>
<dbReference type="InterPro" id="IPR046959">
    <property type="entry name" value="PRK1-6/SRF4-like"/>
</dbReference>
<dbReference type="InterPro" id="IPR000719">
    <property type="entry name" value="Prot_kinase_dom"/>
</dbReference>
<dbReference type="PANTHER" id="PTHR48007">
    <property type="entry name" value="LEUCINE-RICH REPEAT RECEPTOR-LIKE PROTEIN KINASE PXC1"/>
    <property type="match status" value="1"/>
</dbReference>
<dbReference type="PANTHER" id="PTHR48007:SF29">
    <property type="entry name" value="POLLEN RECEPTOR-LIKE KINASE 3"/>
    <property type="match status" value="1"/>
</dbReference>
<dbReference type="Pfam" id="PF00560">
    <property type="entry name" value="LRR_1"/>
    <property type="match status" value="2"/>
</dbReference>
<dbReference type="Pfam" id="PF13855">
    <property type="entry name" value="LRR_8"/>
    <property type="match status" value="1"/>
</dbReference>
<dbReference type="Pfam" id="PF08263">
    <property type="entry name" value="LRRNT_2"/>
    <property type="match status" value="1"/>
</dbReference>
<dbReference type="Pfam" id="PF00069">
    <property type="entry name" value="Pkinase"/>
    <property type="match status" value="1"/>
</dbReference>
<dbReference type="SUPFAM" id="SSF52058">
    <property type="entry name" value="L domain-like"/>
    <property type="match status" value="1"/>
</dbReference>
<dbReference type="SUPFAM" id="SSF56112">
    <property type="entry name" value="Protein kinase-like (PK-like)"/>
    <property type="match status" value="1"/>
</dbReference>
<dbReference type="PROSITE" id="PS50011">
    <property type="entry name" value="PROTEIN_KINASE_DOM"/>
    <property type="match status" value="1"/>
</dbReference>
<organism>
    <name type="scientific">Arabidopsis thaliana</name>
    <name type="common">Mouse-ear cress</name>
    <dbReference type="NCBI Taxonomy" id="3702"/>
    <lineage>
        <taxon>Eukaryota</taxon>
        <taxon>Viridiplantae</taxon>
        <taxon>Streptophyta</taxon>
        <taxon>Embryophyta</taxon>
        <taxon>Tracheophyta</taxon>
        <taxon>Spermatophyta</taxon>
        <taxon>Magnoliopsida</taxon>
        <taxon>eudicotyledons</taxon>
        <taxon>Gunneridae</taxon>
        <taxon>Pentapetalae</taxon>
        <taxon>rosids</taxon>
        <taxon>malvids</taxon>
        <taxon>Brassicales</taxon>
        <taxon>Brassicaceae</taxon>
        <taxon>Camelineae</taxon>
        <taxon>Arabidopsis</taxon>
    </lineage>
</organism>
<feature type="signal peptide" evidence="2">
    <location>
        <begin position="1"/>
        <end position="19"/>
    </location>
</feature>
<feature type="chain" id="PRO_0000431924" description="Pollen receptor-like kinase 3" evidence="2">
    <location>
        <begin position="20"/>
        <end position="633"/>
    </location>
</feature>
<feature type="transmembrane region" description="Helical" evidence="2">
    <location>
        <begin position="249"/>
        <end position="269"/>
    </location>
</feature>
<feature type="repeat" description="LRR 1" evidence="2">
    <location>
        <begin position="90"/>
        <end position="115"/>
    </location>
</feature>
<feature type="repeat" description="LRR 2" evidence="2">
    <location>
        <begin position="117"/>
        <end position="137"/>
    </location>
</feature>
<feature type="repeat" description="LRR 3" evidence="2">
    <location>
        <begin position="138"/>
        <end position="162"/>
    </location>
</feature>
<feature type="repeat" description="LRR 4" evidence="2">
    <location>
        <begin position="163"/>
        <end position="186"/>
    </location>
</feature>
<feature type="repeat" description="LRR 5" evidence="2">
    <location>
        <begin position="188"/>
        <end position="210"/>
    </location>
</feature>
<feature type="domain" description="Protein kinase" evidence="3">
    <location>
        <begin position="358"/>
        <end position="633"/>
    </location>
</feature>
<feature type="region of interest" description="Disordered" evidence="5">
    <location>
        <begin position="294"/>
        <end position="339"/>
    </location>
</feature>
<feature type="compositionally biased region" description="Basic and acidic residues" evidence="5">
    <location>
        <begin position="294"/>
        <end position="314"/>
    </location>
</feature>
<feature type="compositionally biased region" description="Gly residues" evidence="5">
    <location>
        <begin position="328"/>
        <end position="338"/>
    </location>
</feature>
<feature type="binding site" evidence="3">
    <location>
        <begin position="364"/>
        <end position="372"/>
    </location>
    <ligand>
        <name>ATP</name>
        <dbReference type="ChEBI" id="CHEBI:30616"/>
    </ligand>
</feature>
<feature type="binding site" evidence="3">
    <location>
        <position position="386"/>
    </location>
    <ligand>
        <name>ATP</name>
        <dbReference type="ChEBI" id="CHEBI:30616"/>
    </ligand>
</feature>
<feature type="modified residue" description="Phosphoserine" evidence="1">
    <location>
        <position position="438"/>
    </location>
</feature>
<feature type="modified residue" description="Phosphothreonine" evidence="1">
    <location>
        <position position="458"/>
    </location>
</feature>
<feature type="modified residue" description="Phosphoserine" evidence="1">
    <location>
        <position position="535"/>
    </location>
</feature>
<feature type="glycosylation site" description="N-linked (GlcNAc...) asparagine" evidence="4">
    <location>
        <position position="22"/>
    </location>
</feature>
<feature type="glycosylation site" description="N-linked (GlcNAc...) asparagine" evidence="4">
    <location>
        <position position="37"/>
    </location>
</feature>
<feature type="glycosylation site" description="N-linked (GlcNAc...) asparagine" evidence="4">
    <location>
        <position position="123"/>
    </location>
</feature>
<feature type="glycosylation site" description="N-linked (GlcNAc...) asparagine" evidence="4">
    <location>
        <position position="246"/>
    </location>
</feature>
<feature type="disulfide bond" evidence="9 15">
    <location>
        <begin position="53"/>
        <end position="62"/>
    </location>
</feature>
<feature type="disulfide bond" evidence="9 15">
    <location>
        <begin position="224"/>
        <end position="232"/>
    </location>
</feature>
<feature type="helix" evidence="16">
    <location>
        <begin position="28"/>
        <end position="34"/>
    </location>
</feature>
<feature type="strand" evidence="16">
    <location>
        <begin position="60"/>
        <end position="63"/>
    </location>
</feature>
<feature type="turn" evidence="16">
    <location>
        <begin position="64"/>
        <end position="66"/>
    </location>
</feature>
<feature type="strand" evidence="16">
    <location>
        <begin position="67"/>
        <end position="72"/>
    </location>
</feature>
<feature type="helix" evidence="16">
    <location>
        <begin position="84"/>
        <end position="88"/>
    </location>
</feature>
<feature type="strand" evidence="16">
    <location>
        <begin position="95"/>
        <end position="97"/>
    </location>
</feature>
<feature type="strand" evidence="16">
    <location>
        <begin position="104"/>
        <end position="106"/>
    </location>
</feature>
<feature type="helix" evidence="16">
    <location>
        <begin position="110"/>
        <end position="112"/>
    </location>
</feature>
<feature type="strand" evidence="16">
    <location>
        <begin position="118"/>
        <end position="120"/>
    </location>
</feature>
<feature type="strand" evidence="16">
    <location>
        <begin position="125"/>
        <end position="129"/>
    </location>
</feature>
<feature type="turn" evidence="16">
    <location>
        <begin position="132"/>
        <end position="137"/>
    </location>
</feature>
<feature type="strand" evidence="16">
    <location>
        <begin position="143"/>
        <end position="145"/>
    </location>
</feature>
<feature type="strand" evidence="16">
    <location>
        <begin position="149"/>
        <end position="153"/>
    </location>
</feature>
<feature type="helix" evidence="16">
    <location>
        <begin position="157"/>
        <end position="161"/>
    </location>
</feature>
<feature type="strand" evidence="16">
    <location>
        <begin position="167"/>
        <end position="169"/>
    </location>
</feature>
<feature type="strand" evidence="16">
    <location>
        <begin position="191"/>
        <end position="193"/>
    </location>
</feature>
<feature type="strand" evidence="16">
    <location>
        <begin position="196"/>
        <end position="199"/>
    </location>
</feature>
<feature type="helix" evidence="16">
    <location>
        <begin position="205"/>
        <end position="208"/>
    </location>
</feature>
<feature type="strand" evidence="16">
    <location>
        <begin position="214"/>
        <end position="216"/>
    </location>
</feature>
<feature type="strand" evidence="16">
    <location>
        <begin position="224"/>
        <end position="229"/>
    </location>
</feature>
<comment type="function">
    <text evidence="7">Receptor-like kinase involved in the control of pollen germination and pollen tube polar growth (PubMed:23024212). Can phosphorylate ROPGEF1 in vitro (PubMed:23024212).</text>
</comment>
<comment type="catalytic activity">
    <reaction evidence="12">
        <text>L-seryl-[protein] + ATP = O-phospho-L-seryl-[protein] + ADP + H(+)</text>
        <dbReference type="Rhea" id="RHEA:17989"/>
        <dbReference type="Rhea" id="RHEA-COMP:9863"/>
        <dbReference type="Rhea" id="RHEA-COMP:11604"/>
        <dbReference type="ChEBI" id="CHEBI:15378"/>
        <dbReference type="ChEBI" id="CHEBI:29999"/>
        <dbReference type="ChEBI" id="CHEBI:30616"/>
        <dbReference type="ChEBI" id="CHEBI:83421"/>
        <dbReference type="ChEBI" id="CHEBI:456216"/>
        <dbReference type="EC" id="2.7.11.1"/>
    </reaction>
</comment>
<comment type="catalytic activity">
    <reaction evidence="12">
        <text>L-threonyl-[protein] + ATP = O-phospho-L-threonyl-[protein] + ADP + H(+)</text>
        <dbReference type="Rhea" id="RHEA:46608"/>
        <dbReference type="Rhea" id="RHEA-COMP:11060"/>
        <dbReference type="Rhea" id="RHEA-COMP:11605"/>
        <dbReference type="ChEBI" id="CHEBI:15378"/>
        <dbReference type="ChEBI" id="CHEBI:30013"/>
        <dbReference type="ChEBI" id="CHEBI:30616"/>
        <dbReference type="ChEBI" id="CHEBI:61977"/>
        <dbReference type="ChEBI" id="CHEBI:456216"/>
        <dbReference type="EC" id="2.7.11.1"/>
    </reaction>
</comment>
<comment type="activity regulation">
    <text evidence="7">The phosphorylation activity is calcium-independent.</text>
</comment>
<comment type="subunit">
    <text evidence="7 8">Interacts in vitro with ROPGEF1 (via PRONE domain) (PubMed:23024212). Interacts with PRK6 (PubMed:26961657).</text>
</comment>
<comment type="subcellular location">
    <subcellularLocation>
        <location evidence="12">Membrane</location>
        <topology evidence="12">Single-pass membrane protein</topology>
    </subcellularLocation>
</comment>
<comment type="tissue specificity">
    <text evidence="6">Expressed in pollen and/or in flowers, but not in leaves.</text>
</comment>
<comment type="domain">
    <text evidence="3">The protein kinase domain may be catalytically impaired due to the lack of the conserved Asp active site at position 486, which is replaced by a Asn residue.</text>
</comment>
<comment type="similarity">
    <text evidence="12">Belongs to the protein kinase superfamily. Ser/Thr protein kinase family.</text>
</comment>
<evidence type="ECO:0000250" key="1">
    <source>
        <dbReference type="UniProtKB" id="Q94AG2"/>
    </source>
</evidence>
<evidence type="ECO:0000255" key="2"/>
<evidence type="ECO:0000255" key="3">
    <source>
        <dbReference type="PROSITE-ProRule" id="PRU00159"/>
    </source>
</evidence>
<evidence type="ECO:0000255" key="4">
    <source>
        <dbReference type="PROSITE-ProRule" id="PRU00498"/>
    </source>
</evidence>
<evidence type="ECO:0000256" key="5">
    <source>
        <dbReference type="SAM" id="MobiDB-lite"/>
    </source>
</evidence>
<evidence type="ECO:0000269" key="6">
    <source>
    </source>
</evidence>
<evidence type="ECO:0000269" key="7">
    <source>
    </source>
</evidence>
<evidence type="ECO:0000269" key="8">
    <source>
    </source>
</evidence>
<evidence type="ECO:0000269" key="9">
    <source ref="8"/>
</evidence>
<evidence type="ECO:0000303" key="10">
    <source>
    </source>
</evidence>
<evidence type="ECO:0000303" key="11">
    <source>
    </source>
</evidence>
<evidence type="ECO:0000305" key="12"/>
<evidence type="ECO:0000312" key="13">
    <source>
        <dbReference type="Araport" id="AT3G42880"/>
    </source>
</evidence>
<evidence type="ECO:0000312" key="14">
    <source>
        <dbReference type="EMBL" id="CAB86675.1"/>
    </source>
</evidence>
<evidence type="ECO:0007744" key="15">
    <source>
        <dbReference type="PDB" id="5WLS"/>
    </source>
</evidence>
<evidence type="ECO:0007829" key="16">
    <source>
        <dbReference type="PDB" id="5WLS"/>
    </source>
</evidence>
<accession>Q9M1L7</accession>
<protein>
    <recommendedName>
        <fullName evidence="10">Pollen receptor-like kinase 3</fullName>
        <shortName evidence="11">AtPRK3</shortName>
        <ecNumber evidence="12">2.7.11.1</ecNumber>
    </recommendedName>
</protein>
<keyword id="KW-0002">3D-structure</keyword>
<keyword id="KW-0067">ATP-binding</keyword>
<keyword id="KW-1015">Disulfide bond</keyword>
<keyword id="KW-0325">Glycoprotein</keyword>
<keyword id="KW-0418">Kinase</keyword>
<keyword id="KW-0433">Leucine-rich repeat</keyword>
<keyword id="KW-0472">Membrane</keyword>
<keyword id="KW-0547">Nucleotide-binding</keyword>
<keyword id="KW-0597">Phosphoprotein</keyword>
<keyword id="KW-0675">Receptor</keyword>
<keyword id="KW-1185">Reference proteome</keyword>
<keyword id="KW-0677">Repeat</keyword>
<keyword id="KW-0732">Signal</keyword>
<keyword id="KW-0808">Transferase</keyword>
<keyword id="KW-0812">Transmembrane</keyword>
<keyword id="KW-1133">Transmembrane helix</keyword>
<name>PRK3_ARATH</name>
<sequence>MTAVLFLCFLLICFSFTPSLQNVSESEPLVRFKRSVNITKGDLNSWRTGTDPCNGKWFGIYCQKGQTVSGIHVTRLGLSGTINIEDLKDLPNLRTIRLDNNLLSGPLPPFFKLPGLKSLLLSNNSFSGEIADDFFKETPQLKRVFLDNNRLSGKIPASLMQLAGLEELHMQGNQFTGEIPPLTDGNKVLKSLDLSNNDLEGEIPITISDRKNLEMKFEGNQRLCGSPLNIECDEKPSSTGSGNEKNNTAKAIFMVILFLLIFLFVVAIITRWKKKRQPEFRMLGKDHLSDQESVEVRVPDSIKKPIDSSKKRSNAEGSSKKGSSHNGKGAGGGPGSGMGDIIMVNSEKGSFGLPDLMKAAAEVLGNGSLGSAYKAVMANGLSVVVKRIRDMNKLAREAFDTEMQRFGKLRHPNVLTPLAYHYRREEKLVVSEYMPKSSLLYVLHGDRGVYHSELTWATRLKIIQGVARGMDFLHEEFASYDLPHGNLKSSNVLLSETYEPLISDYAFLPLLQPNNASQALFAFKSPEFVQNQQVSPKSDVYCLGIIVLEVMTGKFPSQYLNTGKGGTDIVEWVQSSIAQHKEEELIDPEIASNTDSIKQMVELLRIGAACIASNPNERQNMKEIVRRIERVTL</sequence>
<proteinExistence type="evidence at protein level"/>
<gene>
    <name evidence="10" type="primary">PRK3</name>
    <name evidence="13" type="ordered locus">At3g42880</name>
    <name evidence="14" type="ORF">F18P9.40</name>
</gene>
<reference key="1">
    <citation type="journal article" date="2000" name="Nature">
        <title>Sequence and analysis of chromosome 3 of the plant Arabidopsis thaliana.</title>
        <authorList>
            <person name="Salanoubat M."/>
            <person name="Lemcke K."/>
            <person name="Rieger M."/>
            <person name="Ansorge W."/>
            <person name="Unseld M."/>
            <person name="Fartmann B."/>
            <person name="Valle G."/>
            <person name="Bloecker H."/>
            <person name="Perez-Alonso M."/>
            <person name="Obermaier B."/>
            <person name="Delseny M."/>
            <person name="Boutry M."/>
            <person name="Grivell L.A."/>
            <person name="Mache R."/>
            <person name="Puigdomenech P."/>
            <person name="De Simone V."/>
            <person name="Choisne N."/>
            <person name="Artiguenave F."/>
            <person name="Robert C."/>
            <person name="Brottier P."/>
            <person name="Wincker P."/>
            <person name="Cattolico L."/>
            <person name="Weissenbach J."/>
            <person name="Saurin W."/>
            <person name="Quetier F."/>
            <person name="Schaefer M."/>
            <person name="Mueller-Auer S."/>
            <person name="Gabel C."/>
            <person name="Fuchs M."/>
            <person name="Benes V."/>
            <person name="Wurmbach E."/>
            <person name="Drzonek H."/>
            <person name="Erfle H."/>
            <person name="Jordan N."/>
            <person name="Bangert S."/>
            <person name="Wiedelmann R."/>
            <person name="Kranz H."/>
            <person name="Voss H."/>
            <person name="Holland R."/>
            <person name="Brandt P."/>
            <person name="Nyakatura G."/>
            <person name="Vezzi A."/>
            <person name="D'Angelo M."/>
            <person name="Pallavicini A."/>
            <person name="Toppo S."/>
            <person name="Simionati B."/>
            <person name="Conrad A."/>
            <person name="Hornischer K."/>
            <person name="Kauer G."/>
            <person name="Loehnert T.-H."/>
            <person name="Nordsiek G."/>
            <person name="Reichelt J."/>
            <person name="Scharfe M."/>
            <person name="Schoen O."/>
            <person name="Bargues M."/>
            <person name="Terol J."/>
            <person name="Climent J."/>
            <person name="Navarro P."/>
            <person name="Collado C."/>
            <person name="Perez-Perez A."/>
            <person name="Ottenwaelder B."/>
            <person name="Duchemin D."/>
            <person name="Cooke R."/>
            <person name="Laudie M."/>
            <person name="Berger-Llauro C."/>
            <person name="Purnelle B."/>
            <person name="Masuy D."/>
            <person name="de Haan M."/>
            <person name="Maarse A.C."/>
            <person name="Alcaraz J.-P."/>
            <person name="Cottet A."/>
            <person name="Casacuberta E."/>
            <person name="Monfort A."/>
            <person name="Argiriou A."/>
            <person name="Flores M."/>
            <person name="Liguori R."/>
            <person name="Vitale D."/>
            <person name="Mannhaupt G."/>
            <person name="Haase D."/>
            <person name="Schoof H."/>
            <person name="Rudd S."/>
            <person name="Zaccaria P."/>
            <person name="Mewes H.-W."/>
            <person name="Mayer K.F.X."/>
            <person name="Kaul S."/>
            <person name="Town C.D."/>
            <person name="Koo H.L."/>
            <person name="Tallon L.J."/>
            <person name="Jenkins J."/>
            <person name="Rooney T."/>
            <person name="Rizzo M."/>
            <person name="Walts A."/>
            <person name="Utterback T."/>
            <person name="Fujii C.Y."/>
            <person name="Shea T.P."/>
            <person name="Creasy T.H."/>
            <person name="Haas B."/>
            <person name="Maiti R."/>
            <person name="Wu D."/>
            <person name="Peterson J."/>
            <person name="Van Aken S."/>
            <person name="Pai G."/>
            <person name="Militscher J."/>
            <person name="Sellers P."/>
            <person name="Gill J.E."/>
            <person name="Feldblyum T.V."/>
            <person name="Preuss D."/>
            <person name="Lin X."/>
            <person name="Nierman W.C."/>
            <person name="Salzberg S.L."/>
            <person name="White O."/>
            <person name="Venter J.C."/>
            <person name="Fraser C.M."/>
            <person name="Kaneko T."/>
            <person name="Nakamura Y."/>
            <person name="Sato S."/>
            <person name="Kato T."/>
            <person name="Asamizu E."/>
            <person name="Sasamoto S."/>
            <person name="Kimura T."/>
            <person name="Idesawa K."/>
            <person name="Kawashima K."/>
            <person name="Kishida Y."/>
            <person name="Kiyokawa C."/>
            <person name="Kohara M."/>
            <person name="Matsumoto M."/>
            <person name="Matsuno A."/>
            <person name="Muraki A."/>
            <person name="Nakayama S."/>
            <person name="Nakazaki N."/>
            <person name="Shinpo S."/>
            <person name="Takeuchi C."/>
            <person name="Wada T."/>
            <person name="Watanabe A."/>
            <person name="Yamada M."/>
            <person name="Yasuda M."/>
            <person name="Tabata S."/>
        </authorList>
    </citation>
    <scope>NUCLEOTIDE SEQUENCE [LARGE SCALE GENOMIC DNA]</scope>
    <source>
        <strain>cv. Columbia</strain>
    </source>
</reference>
<reference key="2">
    <citation type="journal article" date="2017" name="Plant J.">
        <title>Araport11: a complete reannotation of the Arabidopsis thaliana reference genome.</title>
        <authorList>
            <person name="Cheng C.Y."/>
            <person name="Krishnakumar V."/>
            <person name="Chan A.P."/>
            <person name="Thibaud-Nissen F."/>
            <person name="Schobel S."/>
            <person name="Town C.D."/>
        </authorList>
    </citation>
    <scope>GENOME REANNOTATION</scope>
    <source>
        <strain>cv. Columbia</strain>
    </source>
</reference>
<reference key="3">
    <citation type="journal article" date="2006" name="Plant Biotechnol. J.">
        <title>Simultaneous high-throughput recombinational cloning of open reading frames in closed and open configurations.</title>
        <authorList>
            <person name="Underwood B.A."/>
            <person name="Vanderhaeghen R."/>
            <person name="Whitford R."/>
            <person name="Town C.D."/>
            <person name="Hilson P."/>
        </authorList>
    </citation>
    <scope>NUCLEOTIDE SEQUENCE [LARGE SCALE MRNA]</scope>
    <source>
        <strain>cv. Columbia</strain>
    </source>
</reference>
<reference key="4">
    <citation type="journal article" date="2010" name="BMC Genomics">
        <title>Genome-wide cloning and sequence analysis of leucine-rich repeat receptor-like protein kinase genes in Arabidopsis thaliana.</title>
        <authorList>
            <person name="Gou X."/>
            <person name="He K."/>
            <person name="Yang H."/>
            <person name="Yuan T."/>
            <person name="Lin H."/>
            <person name="Clouse S.D."/>
            <person name="Li J."/>
        </authorList>
    </citation>
    <scope>NUCLEOTIDE SEQUENCE [LARGE SCALE MRNA]</scope>
    <source>
        <strain>cv. Columbia</strain>
    </source>
</reference>
<reference key="5">
    <citation type="journal article" date="2002" name="Plant Mol. Biol.">
        <title>New pollen-specific receptor kinases identified in tomato, maize and Arabidopsis: the tomato kinases show overlapping but distinct localization patterns on pollen tubes.</title>
        <authorList>
            <person name="Kim H.U."/>
            <person name="Cotter R."/>
            <person name="Johnson S."/>
            <person name="Senda M."/>
            <person name="Dodds P."/>
            <person name="Kulikauska R."/>
            <person name="Tang W."/>
            <person name="Ezcura I."/>
            <person name="Herzmark P."/>
            <person name="McCormick S."/>
        </authorList>
    </citation>
    <scope>TISSUE SPECIFICITY</scope>
    <scope>GENE FAMILY</scope>
    <scope>NOMENCLATURE</scope>
</reference>
<reference key="6">
    <citation type="journal article" date="2013" name="Mol. Plant">
        <title>AtPRK2 Promotes ROP1 activation via RopGEFs in the control of polarized pollen tube growth.</title>
        <authorList>
            <person name="Chang F."/>
            <person name="Gu Y."/>
            <person name="Ma H."/>
            <person name="Yang Z."/>
        </authorList>
    </citation>
    <scope>FUNCTION</scope>
    <scope>GENE FAMILY</scope>
    <scope>NOMENCLATURE</scope>
    <scope>INTERACTION WITH ROPGEF1</scope>
    <scope>ACTIVITY REGULATION</scope>
</reference>
<reference key="7">
    <citation type="journal article" date="2016" name="Nature">
        <title>Tip-localized receptors control pollen tube growth and LURE sensing in Arabidopsis.</title>
        <authorList>
            <person name="Takeuchi H."/>
            <person name="Higashiyama T."/>
        </authorList>
    </citation>
    <scope>INTERACTION WITH PRK6</scope>
</reference>
<reference key="8">
    <citation type="submission" date="2017-07" db="PDB data bank">
        <title>Structure of a Pollen Receptor Kinase 3.</title>
        <authorList>
            <person name="Xu G."/>
            <person name="Chakraborty S."/>
            <person name="Pan H."/>
        </authorList>
    </citation>
    <scope>X-RAY CRYSTALLOGRAPHY (2.50 ANGSTROMS) OF 26-233</scope>
    <scope>DISULFIDE BONDS</scope>
</reference>